<keyword id="KW-0997">Cell inner membrane</keyword>
<keyword id="KW-1003">Cell membrane</keyword>
<keyword id="KW-0407">Ion channel</keyword>
<keyword id="KW-0406">Ion transport</keyword>
<keyword id="KW-0472">Membrane</keyword>
<keyword id="KW-1185">Reference proteome</keyword>
<keyword id="KW-0812">Transmembrane</keyword>
<keyword id="KW-1133">Transmembrane helix</keyword>
<keyword id="KW-0813">Transport</keyword>
<feature type="chain" id="PRO_0000192443" description="Large-conductance mechanosensitive channel">
    <location>
        <begin position="1"/>
        <end position="133"/>
    </location>
</feature>
<feature type="transmembrane region" description="Helical" evidence="1">
    <location>
        <begin position="10"/>
        <end position="30"/>
    </location>
</feature>
<feature type="transmembrane region" description="Helical" evidence="1">
    <location>
        <begin position="76"/>
        <end position="96"/>
    </location>
</feature>
<accession>Q7VKA0</accession>
<dbReference type="EMBL" id="AE017143">
    <property type="protein sequence ID" value="AAP96733.1"/>
    <property type="molecule type" value="Genomic_DNA"/>
</dbReference>
<dbReference type="RefSeq" id="WP_010945754.1">
    <property type="nucleotide sequence ID" value="NC_002940.2"/>
</dbReference>
<dbReference type="SMR" id="Q7VKA0"/>
<dbReference type="STRING" id="233412.HD_2027"/>
<dbReference type="KEGG" id="hdu:HD_2027"/>
<dbReference type="eggNOG" id="COG1970">
    <property type="taxonomic scope" value="Bacteria"/>
</dbReference>
<dbReference type="HOGENOM" id="CLU_095787_0_0_6"/>
<dbReference type="OrthoDB" id="9810350at2"/>
<dbReference type="Proteomes" id="UP000001022">
    <property type="component" value="Chromosome"/>
</dbReference>
<dbReference type="GO" id="GO:0005886">
    <property type="term" value="C:plasma membrane"/>
    <property type="evidence" value="ECO:0007669"/>
    <property type="project" value="UniProtKB-SubCell"/>
</dbReference>
<dbReference type="GO" id="GO:0008381">
    <property type="term" value="F:mechanosensitive monoatomic ion channel activity"/>
    <property type="evidence" value="ECO:0007669"/>
    <property type="project" value="UniProtKB-UniRule"/>
</dbReference>
<dbReference type="FunFam" id="1.10.1200.120:FF:000001">
    <property type="entry name" value="Large-conductance mechanosensitive channel"/>
    <property type="match status" value="1"/>
</dbReference>
<dbReference type="Gene3D" id="1.10.1200.120">
    <property type="entry name" value="Large-conductance mechanosensitive channel, MscL, domain 1"/>
    <property type="match status" value="1"/>
</dbReference>
<dbReference type="HAMAP" id="MF_00115">
    <property type="entry name" value="MscL"/>
    <property type="match status" value="1"/>
</dbReference>
<dbReference type="InterPro" id="IPR019823">
    <property type="entry name" value="Mechanosensitive_channel_CS"/>
</dbReference>
<dbReference type="InterPro" id="IPR001185">
    <property type="entry name" value="MS_channel"/>
</dbReference>
<dbReference type="InterPro" id="IPR037673">
    <property type="entry name" value="MSC/AndL"/>
</dbReference>
<dbReference type="InterPro" id="IPR036019">
    <property type="entry name" value="MscL_channel"/>
</dbReference>
<dbReference type="NCBIfam" id="TIGR00220">
    <property type="entry name" value="mscL"/>
    <property type="match status" value="1"/>
</dbReference>
<dbReference type="NCBIfam" id="NF001843">
    <property type="entry name" value="PRK00567.1-4"/>
    <property type="match status" value="1"/>
</dbReference>
<dbReference type="PANTHER" id="PTHR30266:SF2">
    <property type="entry name" value="LARGE-CONDUCTANCE MECHANOSENSITIVE CHANNEL"/>
    <property type="match status" value="1"/>
</dbReference>
<dbReference type="PANTHER" id="PTHR30266">
    <property type="entry name" value="MECHANOSENSITIVE CHANNEL MSCL"/>
    <property type="match status" value="1"/>
</dbReference>
<dbReference type="Pfam" id="PF01741">
    <property type="entry name" value="MscL"/>
    <property type="match status" value="1"/>
</dbReference>
<dbReference type="PRINTS" id="PR01264">
    <property type="entry name" value="MECHCHANNEL"/>
</dbReference>
<dbReference type="SUPFAM" id="SSF81330">
    <property type="entry name" value="Gated mechanosensitive channel"/>
    <property type="match status" value="1"/>
</dbReference>
<dbReference type="PROSITE" id="PS01327">
    <property type="entry name" value="MSCL"/>
    <property type="match status" value="1"/>
</dbReference>
<sequence length="133" mass="14273">MSILKEFREFAVKGNVMDMAVGVIIGGAFGKIVSSLVSDVIMPPIGWLIGGVDFKDLAIQIAPAKEGAEAVMLKYGAFIQNIFDFLIIAIAVFSMVKAINSLKRPPEVAEAPAVAKGPTQEELLAEIRDLLKK</sequence>
<gene>
    <name evidence="1" type="primary">mscL</name>
    <name type="ordered locus">HD_2027</name>
</gene>
<name>MSCL_HAEDU</name>
<reference key="1">
    <citation type="submission" date="2003-06" db="EMBL/GenBank/DDBJ databases">
        <title>The complete genome sequence of Haemophilus ducreyi.</title>
        <authorList>
            <person name="Munson R.S. Jr."/>
            <person name="Ray W.C."/>
            <person name="Mahairas G."/>
            <person name="Sabo P."/>
            <person name="Mungur R."/>
            <person name="Johnson L."/>
            <person name="Nguyen D."/>
            <person name="Wang J."/>
            <person name="Forst C."/>
            <person name="Hood L."/>
        </authorList>
    </citation>
    <scope>NUCLEOTIDE SEQUENCE [LARGE SCALE GENOMIC DNA]</scope>
    <source>
        <strain>35000HP / ATCC 700724</strain>
    </source>
</reference>
<evidence type="ECO:0000255" key="1">
    <source>
        <dbReference type="HAMAP-Rule" id="MF_00115"/>
    </source>
</evidence>
<evidence type="ECO:0000305" key="2"/>
<proteinExistence type="inferred from homology"/>
<protein>
    <recommendedName>
        <fullName evidence="1">Large-conductance mechanosensitive channel</fullName>
    </recommendedName>
</protein>
<comment type="function">
    <text evidence="1">Channel that opens in response to stretch forces in the membrane lipid bilayer. May participate in the regulation of osmotic pressure changes within the cell.</text>
</comment>
<comment type="subunit">
    <text evidence="1">Homopentamer.</text>
</comment>
<comment type="subcellular location">
    <subcellularLocation>
        <location evidence="1">Cell inner membrane</location>
        <topology evidence="1">Multi-pass membrane protein</topology>
    </subcellularLocation>
</comment>
<comment type="similarity">
    <text evidence="1 2">Belongs to the MscL family.</text>
</comment>
<organism>
    <name type="scientific">Haemophilus ducreyi (strain 35000HP / ATCC 700724)</name>
    <dbReference type="NCBI Taxonomy" id="233412"/>
    <lineage>
        <taxon>Bacteria</taxon>
        <taxon>Pseudomonadati</taxon>
        <taxon>Pseudomonadota</taxon>
        <taxon>Gammaproteobacteria</taxon>
        <taxon>Pasteurellales</taxon>
        <taxon>Pasteurellaceae</taxon>
        <taxon>Haemophilus</taxon>
    </lineage>
</organism>